<feature type="chain" id="PRO_1000061930" description="Small, acid-soluble spore protein P">
    <location>
        <begin position="1"/>
        <end position="48"/>
    </location>
</feature>
<feature type="region of interest" description="Disordered" evidence="2">
    <location>
        <begin position="1"/>
        <end position="48"/>
    </location>
</feature>
<feature type="compositionally biased region" description="Basic and acidic residues" evidence="2">
    <location>
        <begin position="1"/>
        <end position="19"/>
    </location>
</feature>
<feature type="compositionally biased region" description="Basic residues" evidence="2">
    <location>
        <begin position="30"/>
        <end position="48"/>
    </location>
</feature>
<keyword id="KW-0749">Sporulation</keyword>
<gene>
    <name evidence="1" type="primary">sspP</name>
    <name type="ordered locus">BPUM_1697</name>
</gene>
<dbReference type="EMBL" id="CP000813">
    <property type="protein sequence ID" value="ABV62375.1"/>
    <property type="molecule type" value="Genomic_DNA"/>
</dbReference>
<dbReference type="RefSeq" id="WP_012010105.1">
    <property type="nucleotide sequence ID" value="NZ_VEIS01000012.1"/>
</dbReference>
<dbReference type="STRING" id="315750.BPUM_1697"/>
<dbReference type="GeneID" id="5620959"/>
<dbReference type="KEGG" id="bpu:BPUM_1697"/>
<dbReference type="eggNOG" id="ENOG5032ZXB">
    <property type="taxonomic scope" value="Bacteria"/>
</dbReference>
<dbReference type="HOGENOM" id="CLU_210130_1_0_9"/>
<dbReference type="OrthoDB" id="2691914at2"/>
<dbReference type="Proteomes" id="UP000001355">
    <property type="component" value="Chromosome"/>
</dbReference>
<dbReference type="GO" id="GO:0030436">
    <property type="term" value="P:asexual sporulation"/>
    <property type="evidence" value="ECO:0007669"/>
    <property type="project" value="UniProtKB-UniRule"/>
</dbReference>
<dbReference type="GO" id="GO:0030435">
    <property type="term" value="P:sporulation resulting in formation of a cellular spore"/>
    <property type="evidence" value="ECO:0007669"/>
    <property type="project" value="UniProtKB-KW"/>
</dbReference>
<dbReference type="HAMAP" id="MF_00666">
    <property type="entry name" value="SspP"/>
    <property type="match status" value="1"/>
</dbReference>
<dbReference type="InterPro" id="IPR012614">
    <property type="entry name" value="SASP_SspP"/>
</dbReference>
<dbReference type="NCBIfam" id="NF006905">
    <property type="entry name" value="PRK09399.1"/>
    <property type="match status" value="1"/>
</dbReference>
<dbReference type="Pfam" id="PF08179">
    <property type="entry name" value="SspP"/>
    <property type="match status" value="1"/>
</dbReference>
<organism>
    <name type="scientific">Bacillus pumilus (strain SAFR-032)</name>
    <dbReference type="NCBI Taxonomy" id="315750"/>
    <lineage>
        <taxon>Bacteria</taxon>
        <taxon>Bacillati</taxon>
        <taxon>Bacillota</taxon>
        <taxon>Bacilli</taxon>
        <taxon>Bacillales</taxon>
        <taxon>Bacillaceae</taxon>
        <taxon>Bacillus</taxon>
    </lineage>
</organism>
<sequence length="48" mass="5544">MTNKNTGKDIRQNSPKEHQSGQPEPLSGSKKVKNRNHTRQKHNSHHDM</sequence>
<evidence type="ECO:0000255" key="1">
    <source>
        <dbReference type="HAMAP-Rule" id="MF_00666"/>
    </source>
</evidence>
<evidence type="ECO:0000256" key="2">
    <source>
        <dbReference type="SAM" id="MobiDB-lite"/>
    </source>
</evidence>
<protein>
    <recommendedName>
        <fullName evidence="1">Small, acid-soluble spore protein P</fullName>
        <shortName evidence="1">SASP P</shortName>
    </recommendedName>
</protein>
<name>SSPP_BACP2</name>
<accession>A8FDQ8</accession>
<reference key="1">
    <citation type="journal article" date="2007" name="PLoS ONE">
        <title>Paradoxical DNA repair and peroxide resistance gene conservation in Bacillus pumilus SAFR-032.</title>
        <authorList>
            <person name="Gioia J."/>
            <person name="Yerrapragada S."/>
            <person name="Qin X."/>
            <person name="Jiang H."/>
            <person name="Igboeli O.C."/>
            <person name="Muzny D."/>
            <person name="Dugan-Rocha S."/>
            <person name="Ding Y."/>
            <person name="Hawes A."/>
            <person name="Liu W."/>
            <person name="Perez L."/>
            <person name="Kovar C."/>
            <person name="Dinh H."/>
            <person name="Lee S."/>
            <person name="Nazareth L."/>
            <person name="Blyth P."/>
            <person name="Holder M."/>
            <person name="Buhay C."/>
            <person name="Tirumalai M.R."/>
            <person name="Liu Y."/>
            <person name="Dasgupta I."/>
            <person name="Bokhetache L."/>
            <person name="Fujita M."/>
            <person name="Karouia F."/>
            <person name="Eswara Moorthy P."/>
            <person name="Siefert J."/>
            <person name="Uzman A."/>
            <person name="Buzumbo P."/>
            <person name="Verma A."/>
            <person name="Zwiya H."/>
            <person name="McWilliams B.D."/>
            <person name="Olowu A."/>
            <person name="Clinkenbeard K.D."/>
            <person name="Newcombe D."/>
            <person name="Golebiewski L."/>
            <person name="Petrosino J.F."/>
            <person name="Nicholson W.L."/>
            <person name="Fox G.E."/>
            <person name="Venkateswaran K."/>
            <person name="Highlander S.K."/>
            <person name="Weinstock G.M."/>
        </authorList>
    </citation>
    <scope>NUCLEOTIDE SEQUENCE [LARGE SCALE GENOMIC DNA]</scope>
    <source>
        <strain>SAFR-032</strain>
    </source>
</reference>
<proteinExistence type="inferred from homology"/>
<comment type="subcellular location">
    <subcellularLocation>
        <location evidence="1">Spore core</location>
    </subcellularLocation>
</comment>
<comment type="induction">
    <text evidence="1">Expressed only in the forespore compartment of sporulating cells.</text>
</comment>
<comment type="similarity">
    <text evidence="1">Belongs to the SspP family.</text>
</comment>